<keyword id="KW-0025">Alternative splicing</keyword>
<keyword id="KW-1003">Cell membrane</keyword>
<keyword id="KW-1015">Disulfide bond</keyword>
<keyword id="KW-0325">Glycoprotein</keyword>
<keyword id="KW-0406">Ion transport</keyword>
<keyword id="KW-0472">Membrane</keyword>
<keyword id="KW-0597">Phosphoprotein</keyword>
<keyword id="KW-1267">Proteomics identification</keyword>
<keyword id="KW-1185">Reference proteome</keyword>
<keyword id="KW-0812">Transmembrane</keyword>
<keyword id="KW-1133">Transmembrane helix</keyword>
<keyword id="KW-0813">Transport</keyword>
<evidence type="ECO:0000255" key="1"/>
<evidence type="ECO:0000255" key="2">
    <source>
        <dbReference type="PROSITE-ProRule" id="PRU00798"/>
    </source>
</evidence>
<evidence type="ECO:0000256" key="3">
    <source>
        <dbReference type="SAM" id="MobiDB-lite"/>
    </source>
</evidence>
<evidence type="ECO:0000269" key="4">
    <source>
    </source>
</evidence>
<evidence type="ECO:0000269" key="5">
    <source>
    </source>
</evidence>
<evidence type="ECO:0000269" key="6">
    <source>
    </source>
</evidence>
<evidence type="ECO:0000269" key="7">
    <source>
    </source>
</evidence>
<evidence type="ECO:0000269" key="8">
    <source>
    </source>
</evidence>
<evidence type="ECO:0000269" key="9">
    <source>
    </source>
</evidence>
<evidence type="ECO:0000269" key="10">
    <source>
    </source>
</evidence>
<evidence type="ECO:0000303" key="11">
    <source>
    </source>
</evidence>
<evidence type="ECO:0000303" key="12">
    <source>
    </source>
</evidence>
<evidence type="ECO:0000303" key="13">
    <source>
    </source>
</evidence>
<evidence type="ECO:0000305" key="14"/>
<evidence type="ECO:0000305" key="15">
    <source>
    </source>
</evidence>
<evidence type="ECO:0000305" key="16">
    <source>
    </source>
</evidence>
<evidence type="ECO:0000305" key="17">
    <source>
    </source>
</evidence>
<evidence type="ECO:0000305" key="18">
    <source>
    </source>
</evidence>
<evidence type="ECO:0007744" key="19">
    <source>
    </source>
</evidence>
<evidence type="ECO:0007744" key="20">
    <source>
    </source>
</evidence>
<evidence type="ECO:0007744" key="21">
    <source>
    </source>
</evidence>
<reference key="1">
    <citation type="journal article" date="2000" name="Biochem. Biophys. Res. Commun.">
        <title>Molecular identification and characterization of novel members of the human organic anion transporter (OATP) family.</title>
        <authorList>
            <person name="Tamai I."/>
            <person name="Nezu J."/>
            <person name="Uchino H."/>
            <person name="Sai Y."/>
            <person name="Oku A."/>
            <person name="Shimane M."/>
            <person name="Tsuji A."/>
        </authorList>
    </citation>
    <scope>NUCLEOTIDE SEQUENCE [MRNA] (ISOFORM 1)</scope>
    <scope>FUNCTION</scope>
    <scope>TRANSPORTER ACTIVITY</scope>
    <scope>TISSUE SPECIFICITY</scope>
    <scope>DEVELOPMENTAL STAGE</scope>
    <source>
        <tissue>Kidney</tissue>
    </source>
</reference>
<reference key="2">
    <citation type="journal article" date="2001" name="Endocrinology">
        <title>Identification of thyroid hormone transporters in humans: different molecules are involved in a tissue-specific manner.</title>
        <authorList>
            <person name="Fujiwara K."/>
            <person name="Adachi H."/>
            <person name="Nishio T."/>
            <person name="Unno M."/>
            <person name="Tokui T."/>
            <person name="Okabe M."/>
            <person name="Onogawa T."/>
            <person name="Suzuki T."/>
            <person name="Asano N."/>
            <person name="Tanemoto M."/>
            <person name="Seki M."/>
            <person name="Shiiba K."/>
            <person name="Suzuki M."/>
            <person name="Kondo Y."/>
            <person name="Nunoki K."/>
            <person name="Shimosegawa T."/>
            <person name="Iinuma K."/>
            <person name="Ito S."/>
            <person name="Matsuno S."/>
            <person name="Abe T."/>
        </authorList>
    </citation>
    <scope>NUCLEOTIDE SEQUENCE [MRNA] (ISOFORM 1)</scope>
    <scope>FUNCTION</scope>
    <scope>TRANSPORTER ACTIVITY</scope>
    <scope>TISSUE SPECIFICITY</scope>
    <source>
        <tissue>Hippocampus</tissue>
    </source>
</reference>
<reference key="3">
    <citation type="submission" date="1998-11" db="EMBL/GenBank/DDBJ databases">
        <title>Molecular cloning of a putative organic anion transporter, POAT.</title>
        <authorList>
            <person name="Itoh S."/>
            <person name="Coca-Prados M."/>
            <person name="Lu R."/>
            <person name="Chan B.S."/>
            <person name="Schuster V.L."/>
        </authorList>
    </citation>
    <scope>NUCLEOTIDE SEQUENCE (ISOFORM 3)</scope>
</reference>
<reference key="4">
    <citation type="submission" date="1999-11" db="EMBL/GenBank/DDBJ databases">
        <title>Identification and characterization of novel human OATP family members.</title>
        <authorList>
            <person name="Wu Y."/>
            <person name="Hsiang B.H."/>
            <person name="Zhu Y."/>
            <person name="Yang W.-P."/>
            <person name="Kirchgessner T.G."/>
        </authorList>
    </citation>
    <scope>NUCLEOTIDE SEQUENCE (ISOFORM 1)</scope>
</reference>
<reference key="5">
    <citation type="journal article" date="2004" name="Nat. Genet.">
        <title>Complete sequencing and characterization of 21,243 full-length human cDNAs.</title>
        <authorList>
            <person name="Ota T."/>
            <person name="Suzuki Y."/>
            <person name="Nishikawa T."/>
            <person name="Otsuki T."/>
            <person name="Sugiyama T."/>
            <person name="Irie R."/>
            <person name="Wakamatsu A."/>
            <person name="Hayashi K."/>
            <person name="Sato H."/>
            <person name="Nagai K."/>
            <person name="Kimura K."/>
            <person name="Makita H."/>
            <person name="Sekine M."/>
            <person name="Obayashi M."/>
            <person name="Nishi T."/>
            <person name="Shibahara T."/>
            <person name="Tanaka T."/>
            <person name="Ishii S."/>
            <person name="Yamamoto J."/>
            <person name="Saito K."/>
            <person name="Kawai Y."/>
            <person name="Isono Y."/>
            <person name="Nakamura Y."/>
            <person name="Nagahari K."/>
            <person name="Murakami K."/>
            <person name="Yasuda T."/>
            <person name="Iwayanagi T."/>
            <person name="Wagatsuma M."/>
            <person name="Shiratori A."/>
            <person name="Sudo H."/>
            <person name="Hosoiri T."/>
            <person name="Kaku Y."/>
            <person name="Kodaira H."/>
            <person name="Kondo H."/>
            <person name="Sugawara M."/>
            <person name="Takahashi M."/>
            <person name="Kanda K."/>
            <person name="Yokoi T."/>
            <person name="Furuya T."/>
            <person name="Kikkawa E."/>
            <person name="Omura Y."/>
            <person name="Abe K."/>
            <person name="Kamihara K."/>
            <person name="Katsuta N."/>
            <person name="Sato K."/>
            <person name="Tanikawa M."/>
            <person name="Yamazaki M."/>
            <person name="Ninomiya K."/>
            <person name="Ishibashi T."/>
            <person name="Yamashita H."/>
            <person name="Murakawa K."/>
            <person name="Fujimori K."/>
            <person name="Tanai H."/>
            <person name="Kimata M."/>
            <person name="Watanabe M."/>
            <person name="Hiraoka S."/>
            <person name="Chiba Y."/>
            <person name="Ishida S."/>
            <person name="Ono Y."/>
            <person name="Takiguchi S."/>
            <person name="Watanabe S."/>
            <person name="Yosida M."/>
            <person name="Hotuta T."/>
            <person name="Kusano J."/>
            <person name="Kanehori K."/>
            <person name="Takahashi-Fujii A."/>
            <person name="Hara H."/>
            <person name="Tanase T.-O."/>
            <person name="Nomura Y."/>
            <person name="Togiya S."/>
            <person name="Komai F."/>
            <person name="Hara R."/>
            <person name="Takeuchi K."/>
            <person name="Arita M."/>
            <person name="Imose N."/>
            <person name="Musashino K."/>
            <person name="Yuuki H."/>
            <person name="Oshima A."/>
            <person name="Sasaki N."/>
            <person name="Aotsuka S."/>
            <person name="Yoshikawa Y."/>
            <person name="Matsunawa H."/>
            <person name="Ichihara T."/>
            <person name="Shiohata N."/>
            <person name="Sano S."/>
            <person name="Moriya S."/>
            <person name="Momiyama H."/>
            <person name="Satoh N."/>
            <person name="Takami S."/>
            <person name="Terashima Y."/>
            <person name="Suzuki O."/>
            <person name="Nakagawa S."/>
            <person name="Senoh A."/>
            <person name="Mizoguchi H."/>
            <person name="Goto Y."/>
            <person name="Shimizu F."/>
            <person name="Wakebe H."/>
            <person name="Hishigaki H."/>
            <person name="Watanabe T."/>
            <person name="Sugiyama A."/>
            <person name="Takemoto M."/>
            <person name="Kawakami B."/>
            <person name="Yamazaki M."/>
            <person name="Watanabe K."/>
            <person name="Kumagai A."/>
            <person name="Itakura S."/>
            <person name="Fukuzumi Y."/>
            <person name="Fujimori Y."/>
            <person name="Komiyama M."/>
            <person name="Tashiro H."/>
            <person name="Tanigami A."/>
            <person name="Fujiwara T."/>
            <person name="Ono T."/>
            <person name="Yamada K."/>
            <person name="Fujii Y."/>
            <person name="Ozaki K."/>
            <person name="Hirao M."/>
            <person name="Ohmori Y."/>
            <person name="Kawabata A."/>
            <person name="Hikiji T."/>
            <person name="Kobatake N."/>
            <person name="Inagaki H."/>
            <person name="Ikema Y."/>
            <person name="Okamoto S."/>
            <person name="Okitani R."/>
            <person name="Kawakami T."/>
            <person name="Noguchi S."/>
            <person name="Itoh T."/>
            <person name="Shigeta K."/>
            <person name="Senba T."/>
            <person name="Matsumura K."/>
            <person name="Nakajima Y."/>
            <person name="Mizuno T."/>
            <person name="Morinaga M."/>
            <person name="Sasaki M."/>
            <person name="Togashi T."/>
            <person name="Oyama M."/>
            <person name="Hata H."/>
            <person name="Watanabe M."/>
            <person name="Komatsu T."/>
            <person name="Mizushima-Sugano J."/>
            <person name="Satoh T."/>
            <person name="Shirai Y."/>
            <person name="Takahashi Y."/>
            <person name="Nakagawa K."/>
            <person name="Okumura K."/>
            <person name="Nagase T."/>
            <person name="Nomura N."/>
            <person name="Kikuchi H."/>
            <person name="Masuho Y."/>
            <person name="Yamashita R."/>
            <person name="Nakai K."/>
            <person name="Yada T."/>
            <person name="Nakamura Y."/>
            <person name="Ohara O."/>
            <person name="Isogai T."/>
            <person name="Sugano S."/>
        </authorList>
    </citation>
    <scope>NUCLEOTIDE SEQUENCE [LARGE SCALE MRNA] (ISOFORMS 2 AND 4)</scope>
    <scope>VARIANT ILE-78</scope>
    <source>
        <tissue>Ovarian carcinoma</tissue>
    </source>
</reference>
<reference key="6">
    <citation type="journal article" date="2001" name="Nature">
        <title>The DNA sequence and comparative analysis of human chromosome 20.</title>
        <authorList>
            <person name="Deloukas P."/>
            <person name="Matthews L.H."/>
            <person name="Ashurst J.L."/>
            <person name="Burton J."/>
            <person name="Gilbert J.G.R."/>
            <person name="Jones M."/>
            <person name="Stavrides G."/>
            <person name="Almeida J.P."/>
            <person name="Babbage A.K."/>
            <person name="Bagguley C.L."/>
            <person name="Bailey J."/>
            <person name="Barlow K.F."/>
            <person name="Bates K.N."/>
            <person name="Beard L.M."/>
            <person name="Beare D.M."/>
            <person name="Beasley O.P."/>
            <person name="Bird C.P."/>
            <person name="Blakey S.E."/>
            <person name="Bridgeman A.M."/>
            <person name="Brown A.J."/>
            <person name="Buck D."/>
            <person name="Burrill W.D."/>
            <person name="Butler A.P."/>
            <person name="Carder C."/>
            <person name="Carter N.P."/>
            <person name="Chapman J.C."/>
            <person name="Clamp M."/>
            <person name="Clark G."/>
            <person name="Clark L.N."/>
            <person name="Clark S.Y."/>
            <person name="Clee C.M."/>
            <person name="Clegg S."/>
            <person name="Cobley V.E."/>
            <person name="Collier R.E."/>
            <person name="Connor R.E."/>
            <person name="Corby N.R."/>
            <person name="Coulson A."/>
            <person name="Coville G.J."/>
            <person name="Deadman R."/>
            <person name="Dhami P.D."/>
            <person name="Dunn M."/>
            <person name="Ellington A.G."/>
            <person name="Frankland J.A."/>
            <person name="Fraser A."/>
            <person name="French L."/>
            <person name="Garner P."/>
            <person name="Grafham D.V."/>
            <person name="Griffiths C."/>
            <person name="Griffiths M.N.D."/>
            <person name="Gwilliam R."/>
            <person name="Hall R.E."/>
            <person name="Hammond S."/>
            <person name="Harley J.L."/>
            <person name="Heath P.D."/>
            <person name="Ho S."/>
            <person name="Holden J.L."/>
            <person name="Howden P.J."/>
            <person name="Huckle E."/>
            <person name="Hunt A.R."/>
            <person name="Hunt S.E."/>
            <person name="Jekosch K."/>
            <person name="Johnson C.M."/>
            <person name="Johnson D."/>
            <person name="Kay M.P."/>
            <person name="Kimberley A.M."/>
            <person name="King A."/>
            <person name="Knights A."/>
            <person name="Laird G.K."/>
            <person name="Lawlor S."/>
            <person name="Lehvaeslaiho M.H."/>
            <person name="Leversha M.A."/>
            <person name="Lloyd C."/>
            <person name="Lloyd D.M."/>
            <person name="Lovell J.D."/>
            <person name="Marsh V.L."/>
            <person name="Martin S.L."/>
            <person name="McConnachie L.J."/>
            <person name="McLay K."/>
            <person name="McMurray A.A."/>
            <person name="Milne S.A."/>
            <person name="Mistry D."/>
            <person name="Moore M.J.F."/>
            <person name="Mullikin J.C."/>
            <person name="Nickerson T."/>
            <person name="Oliver K."/>
            <person name="Parker A."/>
            <person name="Patel R."/>
            <person name="Pearce T.A.V."/>
            <person name="Peck A.I."/>
            <person name="Phillimore B.J.C.T."/>
            <person name="Prathalingam S.R."/>
            <person name="Plumb R.W."/>
            <person name="Ramsay H."/>
            <person name="Rice C.M."/>
            <person name="Ross M.T."/>
            <person name="Scott C.E."/>
            <person name="Sehra H.K."/>
            <person name="Shownkeen R."/>
            <person name="Sims S."/>
            <person name="Skuce C.D."/>
            <person name="Smith M.L."/>
            <person name="Soderlund C."/>
            <person name="Steward C.A."/>
            <person name="Sulston J.E."/>
            <person name="Swann R.M."/>
            <person name="Sycamore N."/>
            <person name="Taylor R."/>
            <person name="Tee L."/>
            <person name="Thomas D.W."/>
            <person name="Thorpe A."/>
            <person name="Tracey A."/>
            <person name="Tromans A.C."/>
            <person name="Vaudin M."/>
            <person name="Wall M."/>
            <person name="Wallis J.M."/>
            <person name="Whitehead S.L."/>
            <person name="Whittaker P."/>
            <person name="Willey D.L."/>
            <person name="Williams L."/>
            <person name="Williams S.A."/>
            <person name="Wilming L."/>
            <person name="Wray P.W."/>
            <person name="Hubbard T."/>
            <person name="Durbin R.M."/>
            <person name="Bentley D.R."/>
            <person name="Beck S."/>
            <person name="Rogers J."/>
        </authorList>
    </citation>
    <scope>NUCLEOTIDE SEQUENCE [LARGE SCALE GENOMIC DNA]</scope>
</reference>
<reference key="7">
    <citation type="journal article" date="2004" name="Genome Res.">
        <title>The status, quality, and expansion of the NIH full-length cDNA project: the Mammalian Gene Collection (MGC).</title>
        <authorList>
            <consortium name="The MGC Project Team"/>
        </authorList>
    </citation>
    <scope>NUCLEOTIDE SEQUENCE [LARGE SCALE MRNA] (ISOFORM 1)</scope>
    <source>
        <tissue>Pancreas</tissue>
    </source>
</reference>
<reference key="8">
    <citation type="journal article" date="2003" name="Am. J. Physiol.">
        <title>Characterization and identification of steroid sulfate transporters of human placenta.</title>
        <authorList>
            <person name="Ugele B."/>
            <person name="St-Pierre M.V."/>
            <person name="Pihusch M."/>
            <person name="Bahn A."/>
            <person name="Hantschmann P."/>
        </authorList>
    </citation>
    <scope>TISSUE SPECIFICITY</scope>
</reference>
<reference key="9">
    <citation type="journal article" date="2008" name="Mol. Cell">
        <title>Kinase-selective enrichment enables quantitative phosphoproteomics of the kinome across the cell cycle.</title>
        <authorList>
            <person name="Daub H."/>
            <person name="Olsen J.V."/>
            <person name="Bairlein M."/>
            <person name="Gnad F."/>
            <person name="Oppermann F.S."/>
            <person name="Korner R."/>
            <person name="Greff Z."/>
            <person name="Keri G."/>
            <person name="Stemmann O."/>
            <person name="Mann M."/>
        </authorList>
    </citation>
    <scope>IDENTIFICATION BY MASS SPECTROMETRY [LARGE SCALE ANALYSIS]</scope>
    <source>
        <tissue>Cervix carcinoma</tissue>
    </source>
</reference>
<reference key="10">
    <citation type="journal article" date="2008" name="Proc. Natl. Acad. Sci. U.S.A.">
        <title>A quantitative atlas of mitotic phosphorylation.</title>
        <authorList>
            <person name="Dephoure N."/>
            <person name="Zhou C."/>
            <person name="Villen J."/>
            <person name="Beausoleil S.A."/>
            <person name="Bakalarski C.E."/>
            <person name="Elledge S.J."/>
            <person name="Gygi S.P."/>
        </authorList>
    </citation>
    <scope>PHOSPHORYLATION [LARGE SCALE ANALYSIS] AT SER-34; THR-37; SER-40; SER-43; SER-46 AND SER-50</scope>
    <scope>IDENTIFICATION BY MASS SPECTROMETRY [LARGE SCALE ANALYSIS]</scope>
    <source>
        <tissue>Cervix carcinoma</tissue>
    </source>
</reference>
<reference key="11">
    <citation type="journal article" date="2009" name="Am. J. Physiol.">
        <title>Mechanisms of pH-gradient driven transport mediated by organic anion polypeptide transporters.</title>
        <authorList>
            <person name="Leuthold S."/>
            <person name="Hagenbuch B."/>
            <person name="Mohebbi N."/>
            <person name="Wagner C.A."/>
            <person name="Meier P.J."/>
            <person name="Stieger B."/>
        </authorList>
    </citation>
    <scope>FUNCTION</scope>
    <scope>TRANSPORTER ACTIVITY</scope>
    <scope>BIOPHYSICOCHEMICAL PROPERTIES</scope>
    <scope>DOMAIN</scope>
</reference>
<reference key="12">
    <citation type="journal article" date="2010" name="Sci. Signal.">
        <title>Quantitative phosphoproteomics reveals widespread full phosphorylation site occupancy during mitosis.</title>
        <authorList>
            <person name="Olsen J.V."/>
            <person name="Vermeulen M."/>
            <person name="Santamaria A."/>
            <person name="Kumar C."/>
            <person name="Miller M.L."/>
            <person name="Jensen L.J."/>
            <person name="Gnad F."/>
            <person name="Cox J."/>
            <person name="Jensen T.S."/>
            <person name="Nigg E.A."/>
            <person name="Brunak S."/>
            <person name="Mann M."/>
        </authorList>
    </citation>
    <scope>PHOSPHORYLATION [LARGE SCALE ANALYSIS] AT SER-40; SER-43; SER-46 AND SER-50</scope>
    <scope>IDENTIFICATION BY MASS SPECTROMETRY [LARGE SCALE ANALYSIS]</scope>
    <source>
        <tissue>Cervix carcinoma</tissue>
    </source>
</reference>
<reference key="13">
    <citation type="journal article" date="2013" name="J. Proteome Res.">
        <title>Toward a comprehensive characterization of a human cancer cell phosphoproteome.</title>
        <authorList>
            <person name="Zhou H."/>
            <person name="Di Palma S."/>
            <person name="Preisinger C."/>
            <person name="Peng M."/>
            <person name="Polat A.N."/>
            <person name="Heck A.J."/>
            <person name="Mohammed S."/>
        </authorList>
    </citation>
    <scope>PHOSPHORYLATION [LARGE SCALE ANALYSIS] AT SER-34; SER-40 AND SER-43</scope>
    <scope>IDENTIFICATION BY MASS SPECTROMETRY [LARGE SCALE ANALYSIS]</scope>
    <source>
        <tissue>Cervix carcinoma</tissue>
        <tissue>Erythroleukemia</tissue>
    </source>
</reference>
<reference key="14">
    <citation type="journal article" date="2018" name="Biochem. Biophys. Res. Commun.">
        <title>Estrone sulphate uptake by the microvillous membrane of placental syncytiotrophoblast is coupled to glutamate efflux.</title>
        <authorList>
            <person name="Lofthouse E.M."/>
            <person name="Cleal J.K."/>
            <person name="O'Kelly I.M."/>
            <person name="Sengers B.G."/>
            <person name="Lewis R.M."/>
        </authorList>
    </citation>
    <scope>FUNCTION</scope>
    <scope>TRANSPORTER ACTIVITY</scope>
</reference>
<reference key="15">
    <citation type="journal article" date="2022" name="Drug Metab. Dispos.">
        <title>Localization of Xenobiotic Transporters Expressed at the Human Blood-Testis Barrier.</title>
        <authorList>
            <person name="Hau R.K."/>
            <person name="Klein R.R."/>
            <person name="Wright S.H."/>
            <person name="Cherrington N.J."/>
        </authorList>
    </citation>
    <scope>TISSUE SPECIFICITY</scope>
</reference>
<proteinExistence type="evidence at protein level"/>
<accession>Q96BD0</accession>
<accession>Q9H4T7</accession>
<accession>Q9H4T8</accession>
<accession>Q9H8P2</accession>
<accession>Q9NWX8</accession>
<accession>Q9UI35</accession>
<accession>Q9UIG7</accession>
<protein>
    <recommendedName>
        <fullName>Solute carrier organic anion transporter family member 4A1</fullName>
        <shortName evidence="13">OATP4A1</shortName>
    </recommendedName>
    <alternativeName>
        <fullName>Colon organic anion transporter</fullName>
    </alternativeName>
    <alternativeName>
        <fullName>Organic anion transporter polypeptide-related protein 1</fullName>
        <shortName>OATP-RP1</shortName>
        <shortName>OATPRP1</shortName>
        <shortName>POAT</shortName>
    </alternativeName>
    <alternativeName>
        <fullName>Organic anion-transporting polypeptide E</fullName>
        <shortName evidence="11">OATP-E</shortName>
    </alternativeName>
    <alternativeName>
        <fullName>Sodium-independent organic anion transporter E</fullName>
    </alternativeName>
    <alternativeName>
        <fullName>Solute carrier family 21 member 12</fullName>
    </alternativeName>
</protein>
<dbReference type="EMBL" id="AB031051">
    <property type="protein sequence ID" value="BAA89288.1"/>
    <property type="molecule type" value="mRNA"/>
</dbReference>
<dbReference type="EMBL" id="AF187817">
    <property type="protein sequence ID" value="AAG43447.1"/>
    <property type="molecule type" value="mRNA"/>
</dbReference>
<dbReference type="EMBL" id="AF104334">
    <property type="protein sequence ID" value="AAF15545.1"/>
    <property type="molecule type" value="mRNA"/>
</dbReference>
<dbReference type="EMBL" id="AF205072">
    <property type="protein sequence ID" value="AAG42204.1"/>
    <property type="molecule type" value="mRNA"/>
</dbReference>
<dbReference type="EMBL" id="AK023410">
    <property type="protein sequence ID" value="BAB14566.1"/>
    <property type="molecule type" value="mRNA"/>
</dbReference>
<dbReference type="EMBL" id="AK000551">
    <property type="protein sequence ID" value="BAA91247.1"/>
    <property type="status" value="ALT_INIT"/>
    <property type="molecule type" value="mRNA"/>
</dbReference>
<dbReference type="EMBL" id="AL357033">
    <property type="status" value="NOT_ANNOTATED_CDS"/>
    <property type="molecule type" value="Genomic_DNA"/>
</dbReference>
<dbReference type="EMBL" id="BC015727">
    <property type="protein sequence ID" value="AAH15727.1"/>
    <property type="molecule type" value="mRNA"/>
</dbReference>
<dbReference type="CCDS" id="CCDS13501.1">
    <molecule id="Q96BD0-1"/>
</dbReference>
<dbReference type="RefSeq" id="NP_057438.3">
    <molecule id="Q96BD0-1"/>
    <property type="nucleotide sequence ID" value="NM_016354.3"/>
</dbReference>
<dbReference type="RefSeq" id="XP_054179357.1">
    <molecule id="Q96BD0-1"/>
    <property type="nucleotide sequence ID" value="XM_054323382.1"/>
</dbReference>
<dbReference type="SMR" id="Q96BD0"/>
<dbReference type="BioGRID" id="118180">
    <property type="interactions" value="57"/>
</dbReference>
<dbReference type="FunCoup" id="Q96BD0">
    <property type="interactions" value="551"/>
</dbReference>
<dbReference type="IntAct" id="Q96BD0">
    <property type="interactions" value="21"/>
</dbReference>
<dbReference type="MINT" id="Q96BD0"/>
<dbReference type="STRING" id="9606.ENSP00000217159"/>
<dbReference type="ChEMBL" id="CHEMBL2073679"/>
<dbReference type="DrugBank" id="DB01053">
    <property type="generic name" value="Benzylpenicillin"/>
</dbReference>
<dbReference type="DrugBank" id="DB00286">
    <property type="generic name" value="Conjugated estrogens"/>
</dbReference>
<dbReference type="DrugBank" id="DB00509">
    <property type="generic name" value="Dextrothyroxine"/>
</dbReference>
<dbReference type="DrugBank" id="DB00917">
    <property type="generic name" value="Dinoprostone"/>
</dbReference>
<dbReference type="DrugBank" id="DB13952">
    <property type="generic name" value="Estradiol acetate"/>
</dbReference>
<dbReference type="DrugBank" id="DB13953">
    <property type="generic name" value="Estradiol benzoate"/>
</dbReference>
<dbReference type="DrugBank" id="DB13954">
    <property type="generic name" value="Estradiol cypionate"/>
</dbReference>
<dbReference type="DrugBank" id="DB13955">
    <property type="generic name" value="Estradiol dienanthate"/>
</dbReference>
<dbReference type="DrugBank" id="DB13956">
    <property type="generic name" value="Estradiol valerate"/>
</dbReference>
<dbReference type="DrugBank" id="DB00451">
    <property type="generic name" value="Levothyroxine"/>
</dbReference>
<dbReference type="DrugBank" id="DB00279">
    <property type="generic name" value="Liothyronine"/>
</dbReference>
<dbReference type="DrugBank" id="DB01583">
    <property type="generic name" value="Liotrix"/>
</dbReference>
<dbReference type="DrugBank" id="DB04348">
    <property type="generic name" value="Taurocholic acid"/>
</dbReference>
<dbReference type="DrugBank" id="DB09100">
    <property type="generic name" value="Thyroid, porcine"/>
</dbReference>
<dbReference type="MEROPS" id="I01.972"/>
<dbReference type="TCDB" id="2.A.60.1.9">
    <property type="family name" value="the organo anion transporter (oat) family"/>
</dbReference>
<dbReference type="GlyCosmos" id="Q96BD0">
    <property type="glycosylation" value="2 sites, No reported glycans"/>
</dbReference>
<dbReference type="GlyGen" id="Q96BD0">
    <property type="glycosylation" value="2 sites, 1 N-linked glycan (1 site)"/>
</dbReference>
<dbReference type="iPTMnet" id="Q96BD0"/>
<dbReference type="PhosphoSitePlus" id="Q96BD0"/>
<dbReference type="SwissPalm" id="Q96BD0"/>
<dbReference type="BioMuta" id="SLCO4A1"/>
<dbReference type="DMDM" id="27734555"/>
<dbReference type="jPOST" id="Q96BD0"/>
<dbReference type="MassIVE" id="Q96BD0"/>
<dbReference type="PaxDb" id="9606-ENSP00000217159"/>
<dbReference type="PeptideAtlas" id="Q96BD0"/>
<dbReference type="ProteomicsDB" id="76061">
    <molecule id="Q96BD0-1"/>
</dbReference>
<dbReference type="ProteomicsDB" id="76062">
    <molecule id="Q96BD0-2"/>
</dbReference>
<dbReference type="ProteomicsDB" id="76063">
    <molecule id="Q96BD0-3"/>
</dbReference>
<dbReference type="ProteomicsDB" id="76064">
    <molecule id="Q96BD0-4"/>
</dbReference>
<dbReference type="Pumba" id="Q96BD0"/>
<dbReference type="Antibodypedia" id="29551">
    <property type="antibodies" value="36 antibodies from 14 providers"/>
</dbReference>
<dbReference type="DNASU" id="28231"/>
<dbReference type="Ensembl" id="ENST00000217159.6">
    <molecule id="Q96BD0-1"/>
    <property type="protein sequence ID" value="ENSP00000217159.1"/>
    <property type="gene ID" value="ENSG00000101187.16"/>
</dbReference>
<dbReference type="Ensembl" id="ENST00000370507.5">
    <molecule id="Q96BD0-1"/>
    <property type="protein sequence ID" value="ENSP00000359538.1"/>
    <property type="gene ID" value="ENSG00000101187.16"/>
</dbReference>
<dbReference type="GeneID" id="28231"/>
<dbReference type="KEGG" id="hsa:28231"/>
<dbReference type="MANE-Select" id="ENST00000217159.6">
    <property type="protein sequence ID" value="ENSP00000217159.1"/>
    <property type="RefSeq nucleotide sequence ID" value="NM_016354.4"/>
    <property type="RefSeq protein sequence ID" value="NP_057438.3"/>
</dbReference>
<dbReference type="UCSC" id="uc002ydb.1">
    <molecule id="Q96BD0-1"/>
    <property type="organism name" value="human"/>
</dbReference>
<dbReference type="AGR" id="HGNC:10953"/>
<dbReference type="CTD" id="28231"/>
<dbReference type="DisGeNET" id="28231"/>
<dbReference type="GeneCards" id="SLCO4A1"/>
<dbReference type="HGNC" id="HGNC:10953">
    <property type="gene designation" value="SLCO4A1"/>
</dbReference>
<dbReference type="HPA" id="ENSG00000101187">
    <property type="expression patterns" value="Tissue enhanced (lung)"/>
</dbReference>
<dbReference type="MIM" id="612436">
    <property type="type" value="gene"/>
</dbReference>
<dbReference type="neXtProt" id="NX_Q96BD0"/>
<dbReference type="OpenTargets" id="ENSG00000101187"/>
<dbReference type="PharmGKB" id="PA35838"/>
<dbReference type="VEuPathDB" id="HostDB:ENSG00000101187"/>
<dbReference type="eggNOG" id="KOG3626">
    <property type="taxonomic scope" value="Eukaryota"/>
</dbReference>
<dbReference type="GeneTree" id="ENSGT01130000278287"/>
<dbReference type="HOGENOM" id="CLU_008954_2_0_1"/>
<dbReference type="InParanoid" id="Q96BD0"/>
<dbReference type="OMA" id="LLIYTDW"/>
<dbReference type="OrthoDB" id="5062115at2759"/>
<dbReference type="PAN-GO" id="Q96BD0">
    <property type="GO annotations" value="4 GO annotations based on evolutionary models"/>
</dbReference>
<dbReference type="PhylomeDB" id="Q96BD0"/>
<dbReference type="TreeFam" id="TF317540"/>
<dbReference type="PathwayCommons" id="Q96BD0"/>
<dbReference type="Reactome" id="R-HSA-879518">
    <property type="pathway name" value="Transport of organic anions"/>
</dbReference>
<dbReference type="SignaLink" id="Q96BD0"/>
<dbReference type="BioGRID-ORCS" id="28231">
    <property type="hits" value="15 hits in 1157 CRISPR screens"/>
</dbReference>
<dbReference type="ChiTaRS" id="SLCO4A1">
    <property type="organism name" value="human"/>
</dbReference>
<dbReference type="GeneWiki" id="SLCO4A1"/>
<dbReference type="GenomeRNAi" id="28231"/>
<dbReference type="Pharos" id="Q96BD0">
    <property type="development level" value="Tbio"/>
</dbReference>
<dbReference type="PRO" id="PR:Q96BD0"/>
<dbReference type="Proteomes" id="UP000005640">
    <property type="component" value="Chromosome 20"/>
</dbReference>
<dbReference type="RNAct" id="Q96BD0">
    <property type="molecule type" value="protein"/>
</dbReference>
<dbReference type="Bgee" id="ENSG00000101187">
    <property type="expression patterns" value="Expressed in metanephros cortex and 169 other cell types or tissues"/>
</dbReference>
<dbReference type="ExpressionAtlas" id="Q96BD0">
    <property type="expression patterns" value="baseline and differential"/>
</dbReference>
<dbReference type="GO" id="GO:0016323">
    <property type="term" value="C:basolateral plasma membrane"/>
    <property type="evidence" value="ECO:0000318"/>
    <property type="project" value="GO_Central"/>
</dbReference>
<dbReference type="GO" id="GO:0005886">
    <property type="term" value="C:plasma membrane"/>
    <property type="evidence" value="ECO:0000304"/>
    <property type="project" value="Reactome"/>
</dbReference>
<dbReference type="GO" id="GO:0008514">
    <property type="term" value="F:organic anion transmembrane transporter activity"/>
    <property type="evidence" value="ECO:0000314"/>
    <property type="project" value="UniProtKB"/>
</dbReference>
<dbReference type="GO" id="GO:0015132">
    <property type="term" value="F:prostaglandin transmembrane transporter activity"/>
    <property type="evidence" value="ECO:0000314"/>
    <property type="project" value="UniProtKB"/>
</dbReference>
<dbReference type="GO" id="GO:0015347">
    <property type="term" value="F:sodium-independent organic anion transmembrane transporter activity"/>
    <property type="evidence" value="ECO:0000318"/>
    <property type="project" value="GO_Central"/>
</dbReference>
<dbReference type="GO" id="GO:0015349">
    <property type="term" value="F:thyroid hormone transmembrane transporter activity"/>
    <property type="evidence" value="ECO:0000318"/>
    <property type="project" value="GO_Central"/>
</dbReference>
<dbReference type="GO" id="GO:0006811">
    <property type="term" value="P:monoatomic ion transport"/>
    <property type="evidence" value="ECO:0007669"/>
    <property type="project" value="UniProtKB-KW"/>
</dbReference>
<dbReference type="GO" id="GO:0043252">
    <property type="term" value="P:sodium-independent organic anion transport"/>
    <property type="evidence" value="ECO:0000318"/>
    <property type="project" value="GO_Central"/>
</dbReference>
<dbReference type="CDD" id="cd17462">
    <property type="entry name" value="MFS_SLCO4A_OATP4A"/>
    <property type="match status" value="1"/>
</dbReference>
<dbReference type="Gene3D" id="3.30.60.30">
    <property type="match status" value="1"/>
</dbReference>
<dbReference type="Gene3D" id="1.20.1250.20">
    <property type="entry name" value="MFS general substrate transporter like domains"/>
    <property type="match status" value="1"/>
</dbReference>
<dbReference type="InterPro" id="IPR002350">
    <property type="entry name" value="Kazal_dom"/>
</dbReference>
<dbReference type="InterPro" id="IPR036058">
    <property type="entry name" value="Kazal_dom_sf"/>
</dbReference>
<dbReference type="InterPro" id="IPR020846">
    <property type="entry name" value="MFS_dom"/>
</dbReference>
<dbReference type="InterPro" id="IPR036259">
    <property type="entry name" value="MFS_trans_sf"/>
</dbReference>
<dbReference type="InterPro" id="IPR004156">
    <property type="entry name" value="OATP"/>
</dbReference>
<dbReference type="InterPro" id="IPR046329">
    <property type="entry name" value="SO4A1-like"/>
</dbReference>
<dbReference type="NCBIfam" id="TIGR00805">
    <property type="entry name" value="oat"/>
    <property type="match status" value="1"/>
</dbReference>
<dbReference type="PANTHER" id="PTHR11388">
    <property type="entry name" value="ORGANIC ANION TRANSPORTER"/>
    <property type="match status" value="1"/>
</dbReference>
<dbReference type="PANTHER" id="PTHR11388:SF100">
    <property type="entry name" value="SOLUTE CARRIER ORGANIC ANION TRANSPORTER FAMILY MEMBER 4A1"/>
    <property type="match status" value="1"/>
</dbReference>
<dbReference type="Pfam" id="PF07648">
    <property type="entry name" value="Kazal_2"/>
    <property type="match status" value="1"/>
</dbReference>
<dbReference type="Pfam" id="PF03137">
    <property type="entry name" value="OATP"/>
    <property type="match status" value="1"/>
</dbReference>
<dbReference type="SUPFAM" id="SSF100895">
    <property type="entry name" value="Kazal-type serine protease inhibitors"/>
    <property type="match status" value="1"/>
</dbReference>
<dbReference type="SUPFAM" id="SSF103473">
    <property type="entry name" value="MFS general substrate transporter"/>
    <property type="match status" value="1"/>
</dbReference>
<dbReference type="PROSITE" id="PS51465">
    <property type="entry name" value="KAZAL_2"/>
    <property type="match status" value="1"/>
</dbReference>
<dbReference type="PROSITE" id="PS50850">
    <property type="entry name" value="MFS"/>
    <property type="match status" value="1"/>
</dbReference>
<gene>
    <name type="primary">SLCO4A1</name>
    <name type="synonym">OATP1</name>
    <name type="synonym">OATP4A1</name>
    <name type="synonym">OATPE</name>
    <name type="synonym">SLC21A12</name>
</gene>
<name>SO4A1_HUMAN</name>
<feature type="chain" id="PRO_0000191067" description="Solute carrier organic anion transporter family member 4A1">
    <location>
        <begin position="1"/>
        <end position="722"/>
    </location>
</feature>
<feature type="topological domain" description="Cytoplasmic" evidence="1">
    <location>
        <begin position="1"/>
        <end position="103"/>
    </location>
</feature>
<feature type="transmembrane region" description="Helical; Name=1" evidence="1">
    <location>
        <begin position="104"/>
        <end position="124"/>
    </location>
</feature>
<feature type="topological domain" description="Extracellular" evidence="1">
    <location>
        <begin position="125"/>
        <end position="143"/>
    </location>
</feature>
<feature type="transmembrane region" description="Helical; Name=2" evidence="1">
    <location>
        <begin position="144"/>
        <end position="164"/>
    </location>
</feature>
<feature type="topological domain" description="Cytoplasmic" evidence="1">
    <location>
        <begin position="165"/>
        <end position="170"/>
    </location>
</feature>
<feature type="transmembrane region" description="Helical; Name=3" evidence="1">
    <location>
        <begin position="171"/>
        <end position="195"/>
    </location>
</feature>
<feature type="topological domain" description="Extracellular" evidence="1">
    <location>
        <begin position="196"/>
        <end position="222"/>
    </location>
</feature>
<feature type="transmembrane region" description="Helical; Name=4" evidence="1">
    <location>
        <begin position="223"/>
        <end position="253"/>
    </location>
</feature>
<feature type="topological domain" description="Cytoplasmic" evidence="1">
    <location>
        <begin position="254"/>
        <end position="272"/>
    </location>
</feature>
<feature type="transmembrane region" description="Helical; Name=5" evidence="1">
    <location>
        <begin position="273"/>
        <end position="293"/>
    </location>
</feature>
<feature type="topological domain" description="Extracellular" evidence="1">
    <location>
        <begin position="294"/>
        <end position="307"/>
    </location>
</feature>
<feature type="transmembrane region" description="Helical; Name=6" evidence="1">
    <location>
        <begin position="308"/>
        <end position="332"/>
    </location>
</feature>
<feature type="topological domain" description="Cytoplasmic" evidence="1">
    <location>
        <begin position="333"/>
        <end position="378"/>
    </location>
</feature>
<feature type="transmembrane region" description="Helical; Name=7" evidence="1">
    <location>
        <begin position="379"/>
        <end position="400"/>
    </location>
</feature>
<feature type="topological domain" description="Extracellular" evidence="1">
    <location>
        <begin position="401"/>
        <end position="420"/>
    </location>
</feature>
<feature type="transmembrane region" description="Helical; Name=8" evidence="1">
    <location>
        <begin position="421"/>
        <end position="444"/>
    </location>
</feature>
<feature type="topological domain" description="Cytoplasmic" evidence="1">
    <location>
        <begin position="445"/>
        <end position="448"/>
    </location>
</feature>
<feature type="transmembrane region" description="Helical; Name=9" evidence="1">
    <location>
        <begin position="449"/>
        <end position="471"/>
    </location>
</feature>
<feature type="topological domain" description="Extracellular" evidence="1">
    <location>
        <begin position="472"/>
        <end position="580"/>
    </location>
</feature>
<feature type="transmembrane region" description="Helical; Name=10" evidence="1">
    <location>
        <begin position="581"/>
        <end position="603"/>
    </location>
</feature>
<feature type="topological domain" description="Cytoplasmic" evidence="1">
    <location>
        <begin position="604"/>
        <end position="612"/>
    </location>
</feature>
<feature type="transmembrane region" description="Helical; Name=11" evidence="1">
    <location>
        <begin position="613"/>
        <end position="638"/>
    </location>
</feature>
<feature type="topological domain" description="Extracellular" evidence="1">
    <location>
        <begin position="639"/>
        <end position="671"/>
    </location>
</feature>
<feature type="transmembrane region" description="Helical; Name=12" evidence="1">
    <location>
        <begin position="672"/>
        <end position="689"/>
    </location>
</feature>
<feature type="topological domain" description="Cytoplasmic" evidence="1">
    <location>
        <begin position="690"/>
        <end position="722"/>
    </location>
</feature>
<feature type="domain" description="Kazal-like" evidence="2">
    <location>
        <begin position="498"/>
        <end position="555"/>
    </location>
</feature>
<feature type="region of interest" description="Disordered" evidence="3">
    <location>
        <begin position="1"/>
        <end position="52"/>
    </location>
</feature>
<feature type="region of interest" description="Disordered" evidence="3">
    <location>
        <begin position="703"/>
        <end position="722"/>
    </location>
</feature>
<feature type="modified residue" description="Phosphoserine" evidence="19 21">
    <location>
        <position position="34"/>
    </location>
</feature>
<feature type="modified residue" description="Phosphothreonine" evidence="19">
    <location>
        <position position="37"/>
    </location>
</feature>
<feature type="modified residue" description="Phosphoserine" evidence="19 20 21">
    <location>
        <position position="40"/>
    </location>
</feature>
<feature type="modified residue" description="Phosphoserine" evidence="19 20 21">
    <location>
        <position position="43"/>
    </location>
</feature>
<feature type="modified residue" description="Phosphoserine" evidence="19 20">
    <location>
        <position position="46"/>
    </location>
</feature>
<feature type="modified residue" description="Phosphoserine" evidence="19 20">
    <location>
        <position position="50"/>
    </location>
</feature>
<feature type="glycosylation site" description="N-linked (GlcNAc...) asparagine" evidence="1">
    <location>
        <position position="499"/>
    </location>
</feature>
<feature type="glycosylation site" description="N-linked (GlcNAc...) asparagine" evidence="1">
    <location>
        <position position="557"/>
    </location>
</feature>
<feature type="disulfide bond" evidence="2">
    <location>
        <begin position="504"/>
        <end position="534"/>
    </location>
</feature>
<feature type="disulfide bond" evidence="2">
    <location>
        <begin position="510"/>
        <end position="530"/>
    </location>
</feature>
<feature type="disulfide bond" evidence="2">
    <location>
        <begin position="519"/>
        <end position="553"/>
    </location>
</feature>
<feature type="splice variant" id="VSP_006152" description="In isoform 2." evidence="12">
    <original>TYLDENVKSSCSPVYIAIFYTAAILGPAAGYLIGGALLNIYTEMGRRTELTTESPLWVGAWWVGFLGSGAAAFFTAVPILGYPRQLPGSQRYAVMRAAEMHQLKDSSRGEASNPDFGKTIRDLPLSIWLLLKNPTFILLCLAGATEATLITGMSTFSPKFL</original>
    <variation>LFFAIACFLYKPLS</variation>
    <location>
        <begin position="250"/>
        <end position="410"/>
    </location>
</feature>
<feature type="splice variant" id="VSP_006153" description="In isoform 3." evidence="14">
    <original>YRDCSCIPQNLSSGFGHATAGKCTSTCQRKPLLLVFIFVVIFFTFLSSIPALTATLRCVRDPQRSFALGIQWIVVRILGGIPGPIAFGWVIDKACLLWQDQCGQQGSCLVYQNS</original>
    <variation>SGAAAYRPCPPLDPGKGPPCLPLVIGAIVGLPRCTETVAVSLRIFPLVLAMHCREMHFNLSEKAPPSGFHIRCNFLYIPQQHSCTNGNSTVSWGRVCACPELSLQHPEAELCRS</variation>
    <location>
        <begin position="548"/>
        <end position="661"/>
    </location>
</feature>
<feature type="splice variant" id="VSP_006154" description="In isoform 4." evidence="12">
    <original>STCQRKPLLLVFIFVVIFFTFLSSIPALTATL</original>
    <variation>TTALCAARTASCTSHCATQGALQPRRRMWTAR</variation>
    <location>
        <begin position="572"/>
        <end position="603"/>
    </location>
</feature>
<feature type="splice variant" id="VSP_006155" description="In isoform 3." evidence="14">
    <location>
        <begin position="662"/>
        <end position="722"/>
    </location>
</feature>
<feature type="splice variant" id="VSP_006156" description="In isoform 2." evidence="12">
    <original>CFLYKPLSESSDGLETCLPSQSSAPDSATDSQLQSSV</original>
    <variation>SSRAASDHRPRPPGHGGHSAFPDDRTVPLGDAITRELLFDLQPST</variation>
    <location>
        <begin position="686"/>
        <end position="722"/>
    </location>
</feature>
<feature type="sequence variant" id="VAR_053678" description="In dbSNP:rs34419428.">
    <original>R</original>
    <variation>Q</variation>
    <location>
        <position position="70"/>
    </location>
</feature>
<feature type="sequence variant" id="VAR_053679" description="In dbSNP:rs1047099." evidence="7">
    <original>V</original>
    <variation>I</variation>
    <location>
        <position position="78"/>
    </location>
</feature>
<feature type="sequence conflict" description="In Ref. 5; BAB14566." evidence="14" ref="5">
    <original>T</original>
    <variation>M</variation>
    <location>
        <position position="246"/>
    </location>
</feature>
<sequence>MPLHQLGDKPLTFPSPNSAMENGLDHTPPSRRASPGTPLSPGSLRSAAHSPLDTSKQPLCQLWAEKHGARGTHEVRYVSAGQSVACGWWAFAPPCLQVLNTPKGILFFLCAAAFLQGMTVNGFINTVITSLERRYDLHSYQSGLIASSYDIAACLCLTFVSYFGGSGHKPRWLGWGVLLMGTGSLVFALPHFTAGRYEVELDAGVRTCPANPGAVCADSTSGLSRYQLVFMLGQFLHGVGATPLYTLGVTYLDENVKSSCSPVYIAIFYTAAILGPAAGYLIGGALLNIYTEMGRRTELTTESPLWVGAWWVGFLGSGAAAFFTAVPILGYPRQLPGSQRYAVMRAAEMHQLKDSSRGEASNPDFGKTIRDLPLSIWLLLKNPTFILLCLAGATEATLITGMSTFSPKFLESQFSLSASEAATLFGYLVVPAGGGGTFLGGFFVNKLRLRGSAVIKFCLFCTVVSLLGILVFSLHCPSVPMAGVTASYGGSLLPEGHLNLTAPCNAACSCQPEHYSPVCGSDGLMYFSLCHAGCPAATETNVDGQKVYRDCSCIPQNLSSGFGHATAGKCTSTCQRKPLLLVFIFVVIFFTFLSSIPALTATLRCVRDPQRSFALGIQWIVVRILGGIPGPIAFGWVIDKACLLWQDQCGQQGSCLVYQNSAMSRYILIMGLLYKVLGVLFFAIACFLYKPLSESSDGLETCLPSQSSAPDSATDSQLQSSV</sequence>
<comment type="function">
    <text evidence="4 8 9 14">Organic anion antiporter with apparent broad substrate specificity. Recognizes various substrates including thyroid hormones 3,3',5-triiodo-L-thyronine (T3), L-thyroxine (T4) and 3,3',5'-triiodo-L-thyronine (rT3), conjugated steroids such as estrone 3-sulfate and estradiol 17-beta glucuronide, bile acids such as taurocholate and prostanoids such as prostaglandin E2, likely operating in a tissue-specific manner (PubMed:10873595, PubMed:19129463, PubMed:30343886). May be involved in uptake of metabolites from the circulation into organs such as kidney, liver or placenta. Possibly drives the selective transport of thyroid hormones and estrogens coupled to an outward glutamate gradient across the microvillous membrane of the placenta (PubMed:30343886). The transport mechanism, its electrogenicity and potential tissue-specific counterions remain to be elucidated (Probable).</text>
</comment>
<comment type="catalytic activity">
    <reaction evidence="9">
        <text>3,3',5-triiodo-L-thyronine(out) + L-glutamate(in) = 3,3',5-triiodo-L-thyronine(in) + L-glutamate(out)</text>
        <dbReference type="Rhea" id="RHEA:72299"/>
        <dbReference type="ChEBI" id="CHEBI:29985"/>
        <dbReference type="ChEBI" id="CHEBI:533015"/>
    </reaction>
    <physiologicalReaction direction="left-to-right" evidence="18">
        <dbReference type="Rhea" id="RHEA:72300"/>
    </physiologicalReaction>
</comment>
<comment type="catalytic activity">
    <reaction evidence="9">
        <text>L-thyroxine(out) + L-glutamate(in) = L-thyroxine(in) + L-glutamate(out)</text>
        <dbReference type="Rhea" id="RHEA:72303"/>
        <dbReference type="ChEBI" id="CHEBI:29985"/>
        <dbReference type="ChEBI" id="CHEBI:58448"/>
    </reaction>
    <physiologicalReaction direction="left-to-right" evidence="18">
        <dbReference type="Rhea" id="RHEA:72304"/>
    </physiologicalReaction>
</comment>
<comment type="catalytic activity">
    <reaction evidence="9">
        <text>estrone 3-sulfate(out) + L-glutamate(in) = estrone 3-sulfate(in) + L-glutamate(out)</text>
        <dbReference type="Rhea" id="RHEA:72239"/>
        <dbReference type="ChEBI" id="CHEBI:29985"/>
        <dbReference type="ChEBI" id="CHEBI:60050"/>
    </reaction>
    <physiologicalReaction direction="left-to-right" evidence="18">
        <dbReference type="Rhea" id="RHEA:72240"/>
    </physiologicalReaction>
</comment>
<comment type="catalytic activity">
    <reaction evidence="9">
        <text>taurocholate(out) + L-glutamate(in) = taurocholate(in) + L-glutamate(out)</text>
        <dbReference type="Rhea" id="RHEA:72307"/>
        <dbReference type="ChEBI" id="CHEBI:29985"/>
        <dbReference type="ChEBI" id="CHEBI:36257"/>
    </reaction>
    <physiologicalReaction direction="left-to-right" evidence="18">
        <dbReference type="Rhea" id="RHEA:72308"/>
    </physiologicalReaction>
</comment>
<comment type="catalytic activity">
    <reaction evidence="5">
        <text>3,3',5-triiodo-L-thyronine(out) = 3,3',5-triiodo-L-thyronine(in)</text>
        <dbReference type="Rhea" id="RHEA:71811"/>
        <dbReference type="ChEBI" id="CHEBI:533015"/>
    </reaction>
    <physiologicalReaction direction="left-to-right" evidence="16">
        <dbReference type="Rhea" id="RHEA:71812"/>
    </physiologicalReaction>
</comment>
<comment type="catalytic activity">
    <reaction evidence="5 8">
        <text>L-thyroxine(out) = L-thyroxine(in)</text>
        <dbReference type="Rhea" id="RHEA:71819"/>
        <dbReference type="ChEBI" id="CHEBI:58448"/>
    </reaction>
    <physiologicalReaction direction="left-to-right" evidence="16 17">
        <dbReference type="Rhea" id="RHEA:71820"/>
    </physiologicalReaction>
</comment>
<comment type="catalytic activity">
    <reaction evidence="5">
        <text>3,3',5'-triiodo-L-thyronine(out) = 3,3',5'-triiodo-L-thyronine(in)</text>
        <dbReference type="Rhea" id="RHEA:71815"/>
        <dbReference type="ChEBI" id="CHEBI:57261"/>
    </reaction>
    <physiologicalReaction direction="left-to-right" evidence="16">
        <dbReference type="Rhea" id="RHEA:71816"/>
    </physiologicalReaction>
</comment>
<comment type="catalytic activity">
    <reaction evidence="4 8">
        <text>estrone 3-sulfate(out) = estrone 3-sulfate(in)</text>
        <dbReference type="Rhea" id="RHEA:71835"/>
        <dbReference type="ChEBI" id="CHEBI:60050"/>
    </reaction>
    <physiologicalReaction direction="left-to-right" evidence="15 17">
        <dbReference type="Rhea" id="RHEA:71836"/>
    </physiologicalReaction>
</comment>
<comment type="catalytic activity">
    <reaction evidence="8">
        <text>17beta-estradiol 17-O-(beta-D-glucuronate)(out) = 17beta-estradiol 17-O-(beta-D-glucuronate)(in)</text>
        <dbReference type="Rhea" id="RHEA:72691"/>
        <dbReference type="ChEBI" id="CHEBI:82961"/>
    </reaction>
    <physiologicalReaction direction="left-to-right" evidence="17">
        <dbReference type="Rhea" id="RHEA:72692"/>
    </physiologicalReaction>
</comment>
<comment type="catalytic activity">
    <reaction evidence="5">
        <text>taurocholate(out) = taurocholate(in)</text>
        <dbReference type="Rhea" id="RHEA:71703"/>
        <dbReference type="ChEBI" id="CHEBI:36257"/>
    </reaction>
    <physiologicalReaction direction="left-to-right" evidence="16">
        <dbReference type="Rhea" id="RHEA:71704"/>
    </physiologicalReaction>
</comment>
<comment type="catalytic activity">
    <reaction evidence="4">
        <text>prostaglandin E2(out) = prostaglandin E2(in)</text>
        <dbReference type="Rhea" id="RHEA:50984"/>
        <dbReference type="ChEBI" id="CHEBI:606564"/>
    </reaction>
    <physiologicalReaction direction="left-to-right" evidence="16">
        <dbReference type="Rhea" id="RHEA:50985"/>
    </physiologicalReaction>
</comment>
<comment type="biophysicochemical properties">
    <phDependence>
        <text evidence="8">Optimum pH is 6.5 with estrone 3-sulfate and L-thyroxine (T4) as substrates.</text>
    </phDependence>
</comment>
<comment type="interaction">
    <interactant intactId="EBI-2822217">
        <id>Q96BD0</id>
    </interactant>
    <interactant intactId="EBI-10178951">
        <id>O00155</id>
        <label>GPR25</label>
    </interactant>
    <organismsDiffer>false</organismsDiffer>
    <experiments>3</experiments>
</comment>
<comment type="subcellular location">
    <subcellularLocation>
        <location evidence="18">Cell membrane</location>
        <topology evidence="1">Multi-pass membrane protein</topology>
    </subcellularLocation>
</comment>
<comment type="alternative products">
    <event type="alternative splicing"/>
    <isoform>
        <id>Q96BD0-1</id>
        <name>1</name>
        <sequence type="displayed"/>
    </isoform>
    <isoform>
        <id>Q96BD0-2</id>
        <name>2</name>
        <sequence type="described" ref="VSP_006152 VSP_006156"/>
    </isoform>
    <isoform>
        <id>Q96BD0-3</id>
        <name>3</name>
        <sequence type="described" ref="VSP_006153 VSP_006155"/>
    </isoform>
    <isoform>
        <id>Q96BD0-4</id>
        <name>4</name>
        <sequence type="described" ref="VSP_006154"/>
    </isoform>
    <text>Experimental confirmation may be lacking for some isoforms.</text>
</comment>
<comment type="tissue specificity">
    <text evidence="4 5 6 10">Widely expressed (PubMed:10873595, PubMed:11316767). Expressed in placental trophoblasts (PubMed:10873595, PubMed:12409283). Expressed in pancreas, kidney, skeletal muscle, liver, lung, brain, heart, colon, small intestine, ovary, testis, prostate, thymus and spleen. In testis, primarily localized to Leydig cells (PubMed:35307651).</text>
</comment>
<comment type="developmental stage">
    <text evidence="4">Expressed in fetal brain, heart, kidney, liver, lung, skeletal muscle, spleen and pancreas (PubMed:10873595).</text>
</comment>
<comment type="domain">
    <text evidence="8">A conserved histidine residue in the third TMD (His-191) may play an essential role in the pH sensitivity of SLCO4A1/OATP4A1-mediated substrate transport.</text>
</comment>
<comment type="similarity">
    <text evidence="14">Belongs to the organo anion transporter (TC 2.A.60) family.</text>
</comment>
<comment type="sequence caution" evidence="14">
    <conflict type="erroneous initiation">
        <sequence resource="EMBL-CDS" id="BAA91247"/>
    </conflict>
</comment>
<organism>
    <name type="scientific">Homo sapiens</name>
    <name type="common">Human</name>
    <dbReference type="NCBI Taxonomy" id="9606"/>
    <lineage>
        <taxon>Eukaryota</taxon>
        <taxon>Metazoa</taxon>
        <taxon>Chordata</taxon>
        <taxon>Craniata</taxon>
        <taxon>Vertebrata</taxon>
        <taxon>Euteleostomi</taxon>
        <taxon>Mammalia</taxon>
        <taxon>Eutheria</taxon>
        <taxon>Euarchontoglires</taxon>
        <taxon>Primates</taxon>
        <taxon>Haplorrhini</taxon>
        <taxon>Catarrhini</taxon>
        <taxon>Hominidae</taxon>
        <taxon>Homo</taxon>
    </lineage>
</organism>